<evidence type="ECO:0000255" key="1">
    <source>
        <dbReference type="HAMAP-Rule" id="MF_00385"/>
    </source>
</evidence>
<evidence type="ECO:0000305" key="2"/>
<gene>
    <name evidence="1" type="primary">rpsP</name>
    <name type="ordered locus">RT0869</name>
</gene>
<reference key="1">
    <citation type="journal article" date="2004" name="J. Bacteriol.">
        <title>Complete genome sequence of Rickettsia typhi and comparison with sequences of other Rickettsiae.</title>
        <authorList>
            <person name="McLeod M.P."/>
            <person name="Qin X."/>
            <person name="Karpathy S.E."/>
            <person name="Gioia J."/>
            <person name="Highlander S.K."/>
            <person name="Fox G.E."/>
            <person name="McNeill T.Z."/>
            <person name="Jiang H."/>
            <person name="Muzny D."/>
            <person name="Jacob L.S."/>
            <person name="Hawes A.C."/>
            <person name="Sodergren E."/>
            <person name="Gill R."/>
            <person name="Hume J."/>
            <person name="Morgan M."/>
            <person name="Fan G."/>
            <person name="Amin A.G."/>
            <person name="Gibbs R.A."/>
            <person name="Hong C."/>
            <person name="Yu X.-J."/>
            <person name="Walker D.H."/>
            <person name="Weinstock G.M."/>
        </authorList>
    </citation>
    <scope>NUCLEOTIDE SEQUENCE [LARGE SCALE GENOMIC DNA]</scope>
    <source>
        <strain>ATCC VR-144 / Wilmington</strain>
    </source>
</reference>
<protein>
    <recommendedName>
        <fullName evidence="1">Small ribosomal subunit protein bS16</fullName>
    </recommendedName>
    <alternativeName>
        <fullName evidence="2">30S ribosomal protein S16</fullName>
    </alternativeName>
</protein>
<keyword id="KW-0687">Ribonucleoprotein</keyword>
<keyword id="KW-0689">Ribosomal protein</keyword>
<dbReference type="EMBL" id="AE017197">
    <property type="protein sequence ID" value="AAU04320.1"/>
    <property type="molecule type" value="Genomic_DNA"/>
</dbReference>
<dbReference type="RefSeq" id="WP_011191294.1">
    <property type="nucleotide sequence ID" value="NC_006142.1"/>
</dbReference>
<dbReference type="SMR" id="Q68VN6"/>
<dbReference type="KEGG" id="rty:RT0869"/>
<dbReference type="eggNOG" id="COG0228">
    <property type="taxonomic scope" value="Bacteria"/>
</dbReference>
<dbReference type="HOGENOM" id="CLU_100590_3_1_5"/>
<dbReference type="OrthoDB" id="9807878at2"/>
<dbReference type="Proteomes" id="UP000000604">
    <property type="component" value="Chromosome"/>
</dbReference>
<dbReference type="GO" id="GO:0005737">
    <property type="term" value="C:cytoplasm"/>
    <property type="evidence" value="ECO:0007669"/>
    <property type="project" value="UniProtKB-ARBA"/>
</dbReference>
<dbReference type="GO" id="GO:0015935">
    <property type="term" value="C:small ribosomal subunit"/>
    <property type="evidence" value="ECO:0007669"/>
    <property type="project" value="TreeGrafter"/>
</dbReference>
<dbReference type="GO" id="GO:0003735">
    <property type="term" value="F:structural constituent of ribosome"/>
    <property type="evidence" value="ECO:0007669"/>
    <property type="project" value="InterPro"/>
</dbReference>
<dbReference type="GO" id="GO:0006412">
    <property type="term" value="P:translation"/>
    <property type="evidence" value="ECO:0007669"/>
    <property type="project" value="UniProtKB-UniRule"/>
</dbReference>
<dbReference type="Gene3D" id="3.30.1320.10">
    <property type="match status" value="1"/>
</dbReference>
<dbReference type="HAMAP" id="MF_00385">
    <property type="entry name" value="Ribosomal_bS16"/>
    <property type="match status" value="1"/>
</dbReference>
<dbReference type="InterPro" id="IPR000307">
    <property type="entry name" value="Ribosomal_bS16"/>
</dbReference>
<dbReference type="InterPro" id="IPR020592">
    <property type="entry name" value="Ribosomal_bS16_CS"/>
</dbReference>
<dbReference type="InterPro" id="IPR023803">
    <property type="entry name" value="Ribosomal_bS16_dom_sf"/>
</dbReference>
<dbReference type="NCBIfam" id="TIGR00002">
    <property type="entry name" value="S16"/>
    <property type="match status" value="1"/>
</dbReference>
<dbReference type="PANTHER" id="PTHR12919">
    <property type="entry name" value="30S RIBOSOMAL PROTEIN S16"/>
    <property type="match status" value="1"/>
</dbReference>
<dbReference type="PANTHER" id="PTHR12919:SF20">
    <property type="entry name" value="SMALL RIBOSOMAL SUBUNIT PROTEIN BS16M"/>
    <property type="match status" value="1"/>
</dbReference>
<dbReference type="Pfam" id="PF00886">
    <property type="entry name" value="Ribosomal_S16"/>
    <property type="match status" value="1"/>
</dbReference>
<dbReference type="SUPFAM" id="SSF54565">
    <property type="entry name" value="Ribosomal protein S16"/>
    <property type="match status" value="1"/>
</dbReference>
<dbReference type="PROSITE" id="PS00732">
    <property type="entry name" value="RIBOSOMAL_S16"/>
    <property type="match status" value="1"/>
</dbReference>
<organism>
    <name type="scientific">Rickettsia typhi (strain ATCC VR-144 / Wilmington)</name>
    <dbReference type="NCBI Taxonomy" id="257363"/>
    <lineage>
        <taxon>Bacteria</taxon>
        <taxon>Pseudomonadati</taxon>
        <taxon>Pseudomonadota</taxon>
        <taxon>Alphaproteobacteria</taxon>
        <taxon>Rickettsiales</taxon>
        <taxon>Rickettsiaceae</taxon>
        <taxon>Rickettsieae</taxon>
        <taxon>Rickettsia</taxon>
        <taxon>typhus group</taxon>
    </lineage>
</organism>
<sequence>MAVKIRLARGGAKKRPFYRVVIANATAPRDGDFLEKVGTYNPMLASDNSERVVLKKDRIEYWLSTGAKPTERVAKFIEKAGVTLPKNVKKEMEVKAKNRKVRPSKKESKES</sequence>
<proteinExistence type="inferred from homology"/>
<accession>Q68VN6</accession>
<feature type="chain" id="PRO_0000243864" description="Small ribosomal subunit protein bS16">
    <location>
        <begin position="1"/>
        <end position="111"/>
    </location>
</feature>
<comment type="similarity">
    <text evidence="1">Belongs to the bacterial ribosomal protein bS16 family.</text>
</comment>
<name>RS16_RICTY</name>